<accession>Q6VMW0</accession>
<reference key="1">
    <citation type="journal article" date="2004" name="Phytochemistry">
        <title>Bio-fermentation of modified flavonoids: an example of in vivo diversification of secondary metabolites.</title>
        <authorList>
            <person name="Willits M.G."/>
            <person name="Giovanni M."/>
            <person name="Prata R.T.N."/>
            <person name="Kramer C.M."/>
            <person name="De Luca V."/>
            <person name="Steffens J.C."/>
            <person name="Graser G."/>
        </authorList>
    </citation>
    <scope>NUCLEOTIDE SEQUENCE [MRNA]</scope>
    <scope>FUNCTION</scope>
    <scope>CATALYTIC ACTIVITY</scope>
    <source>
        <tissue>Leaf</tissue>
    </source>
</reference>
<reference key="2">
    <citation type="journal article" date="2019" name="Nat. Prod. Rep.">
        <title>Non-volatile natural products in plant glandular trichomes: chemistry, biological activities and biosynthesis.</title>
        <authorList>
            <person name="Liu Y."/>
            <person name="Jing S.-X."/>
            <person name="Luo S.-H."/>
            <person name="Li S.-H."/>
        </authorList>
    </citation>
    <scope>PATHWAY</scope>
    <scope>REVIEW</scope>
</reference>
<sequence>MALPNGISSKQELLEAQAHVWNHIYSYINSMSLKCAIQLGIPDAIHKHGNPITLSQLADALNINKAKSHGLFRLMRILVHSGFFDKVKVKVKVEGEDEEEEEDAYSLTPASRLLLRSEPLSVAPFALAMSDPVYTETWHHLSEWFRNDAVAAFDTKYGMTFPEYAVADDRLNVLFNEAMACDAGFVNSILTTECREIFDGLESMVDVGGGTGATAKGIAAAFPGMECTVLDLPNVVGGLKGSENLSFVSGDMFDFIPHADAIFMKFILHDWNDEECVKILKKCKEAISRSNNSCRKIILVEIVMEDEKETHEATETKLFFDMQMLAIITGKERSEKEWGKLFFDAGFTNYKITRVLGLRSVIEVFP</sequence>
<comment type="function">
    <text evidence="3">Flavonoid 8-O-methyltransferase involved in the biosynthesis of polymethoxylated flavonoids natural products such as pebrellin, aroma compounds which contribute to the flavor of peppermint, and exhibit pharmacological activities such as anti-allergic, anti-oxidant, antibacterial, anti-proliferative, and anti-inflammatory effects (PubMed:14697269). Catalyzes S-adenosylmethionine-dependent regioselective 8-O-methylation of flavonoids; active on various hydroxylated flavonoid substrates, including 7,8,3'4'-tetrahydroxy-flavone, 7,8,4'-trihydroxy-flavone and 8-hydroxy-flavone 7-methyl ether (PubMed:14697269).</text>
</comment>
<comment type="catalytic activity">
    <reaction evidence="3">
        <text>3,3',4',5,7,8-hexahydroxyflavone + S-adenosyl-L-methionine = 3,3',4',5,7-pentahydroxy-8-methoxyflavone + S-adenosyl-L-homocysteine + H(+)</text>
        <dbReference type="Rhea" id="RHEA:16593"/>
        <dbReference type="ChEBI" id="CHEBI:15378"/>
        <dbReference type="ChEBI" id="CHEBI:57856"/>
        <dbReference type="ChEBI" id="CHEBI:58544"/>
        <dbReference type="ChEBI" id="CHEBI:59789"/>
        <dbReference type="ChEBI" id="CHEBI:77862"/>
        <dbReference type="EC" id="2.1.1.88"/>
    </reaction>
</comment>
<comment type="catalytic activity">
    <reaction evidence="3">
        <text>4',7,8-trihydroxyflavone + S-adenosyl-L-methionine = 4',7-dihydroxy-8-methoxyflavone + S-adenosyl-L-homocysteine + H(+)</text>
        <dbReference type="Rhea" id="RHEA:73135"/>
        <dbReference type="ChEBI" id="CHEBI:15378"/>
        <dbReference type="ChEBI" id="CHEBI:57856"/>
        <dbReference type="ChEBI" id="CHEBI:59789"/>
        <dbReference type="ChEBI" id="CHEBI:192709"/>
        <dbReference type="ChEBI" id="CHEBI:192765"/>
    </reaction>
    <physiologicalReaction direction="left-to-right" evidence="6">
        <dbReference type="Rhea" id="RHEA:73136"/>
    </physiologicalReaction>
</comment>
<comment type="catalytic activity">
    <reaction evidence="3">
        <text>8-hydroxy-7-methoxyflavone + S-adenosyl-L-methionine = 7,8-dimethoxyflavone + S-adenosyl-L-homocysteine + H(+)</text>
        <dbReference type="Rhea" id="RHEA:73131"/>
        <dbReference type="ChEBI" id="CHEBI:15378"/>
        <dbReference type="ChEBI" id="CHEBI:57856"/>
        <dbReference type="ChEBI" id="CHEBI:59789"/>
        <dbReference type="ChEBI" id="CHEBI:192766"/>
        <dbReference type="ChEBI" id="CHEBI:192767"/>
    </reaction>
    <physiologicalReaction direction="left-to-right" evidence="6">
        <dbReference type="Rhea" id="RHEA:73132"/>
    </physiologicalReaction>
</comment>
<comment type="pathway">
    <text evidence="5">Flavonoid metabolism.</text>
</comment>
<comment type="subunit">
    <text evidence="1">Homodimer.</text>
</comment>
<comment type="similarity">
    <text evidence="2">Belongs to the class I-like SAM-binding methyltransferase superfamily. Cation-independent O-methyltransferase family. COMT subfamily.</text>
</comment>
<dbReference type="EC" id="2.1.1.88" evidence="3"/>
<dbReference type="EC" id="2.1.1.-" evidence="3"/>
<dbReference type="EMBL" id="AY337459">
    <property type="protein sequence ID" value="AAR09600.1"/>
    <property type="molecule type" value="mRNA"/>
</dbReference>
<dbReference type="SMR" id="Q6VMW0"/>
<dbReference type="BRENDA" id="2.1.1.88">
    <property type="organism ID" value="3222"/>
</dbReference>
<dbReference type="GO" id="GO:0030761">
    <property type="term" value="F:8-hydroxyquercitin 8-O-methyltransferase activity"/>
    <property type="evidence" value="ECO:0000314"/>
    <property type="project" value="UniProtKB"/>
</dbReference>
<dbReference type="GO" id="GO:0008171">
    <property type="term" value="F:O-methyltransferase activity"/>
    <property type="evidence" value="ECO:0007669"/>
    <property type="project" value="InterPro"/>
</dbReference>
<dbReference type="GO" id="GO:0046983">
    <property type="term" value="F:protein dimerization activity"/>
    <property type="evidence" value="ECO:0007669"/>
    <property type="project" value="InterPro"/>
</dbReference>
<dbReference type="GO" id="GO:0009812">
    <property type="term" value="P:flavonoid metabolic process"/>
    <property type="evidence" value="ECO:0000314"/>
    <property type="project" value="UniProtKB"/>
</dbReference>
<dbReference type="GO" id="GO:0032259">
    <property type="term" value="P:methylation"/>
    <property type="evidence" value="ECO:0000314"/>
    <property type="project" value="UniProtKB"/>
</dbReference>
<dbReference type="FunFam" id="1.10.10.10:FF:000213">
    <property type="entry name" value="Coniferyl alcohol 9-O-methyltransferase"/>
    <property type="match status" value="1"/>
</dbReference>
<dbReference type="FunFam" id="3.40.50.150:FF:000206">
    <property type="entry name" value="O-methyltransferase ZRP4"/>
    <property type="match status" value="1"/>
</dbReference>
<dbReference type="Gene3D" id="3.40.50.150">
    <property type="entry name" value="Vaccinia Virus protein VP39"/>
    <property type="match status" value="1"/>
</dbReference>
<dbReference type="Gene3D" id="1.10.10.10">
    <property type="entry name" value="Winged helix-like DNA-binding domain superfamily/Winged helix DNA-binding domain"/>
    <property type="match status" value="1"/>
</dbReference>
<dbReference type="InterPro" id="IPR016461">
    <property type="entry name" value="COMT-like"/>
</dbReference>
<dbReference type="InterPro" id="IPR001077">
    <property type="entry name" value="O_MeTrfase_dom"/>
</dbReference>
<dbReference type="InterPro" id="IPR012967">
    <property type="entry name" value="Plant_O-MeTrfase_dimerisation"/>
</dbReference>
<dbReference type="InterPro" id="IPR029063">
    <property type="entry name" value="SAM-dependent_MTases_sf"/>
</dbReference>
<dbReference type="InterPro" id="IPR036388">
    <property type="entry name" value="WH-like_DNA-bd_sf"/>
</dbReference>
<dbReference type="InterPro" id="IPR036390">
    <property type="entry name" value="WH_DNA-bd_sf"/>
</dbReference>
<dbReference type="PANTHER" id="PTHR11746">
    <property type="entry name" value="O-METHYLTRANSFERASE"/>
    <property type="match status" value="1"/>
</dbReference>
<dbReference type="Pfam" id="PF08100">
    <property type="entry name" value="Dimerisation"/>
    <property type="match status" value="1"/>
</dbReference>
<dbReference type="Pfam" id="PF00891">
    <property type="entry name" value="Methyltransf_2"/>
    <property type="match status" value="1"/>
</dbReference>
<dbReference type="PIRSF" id="PIRSF005739">
    <property type="entry name" value="O-mtase"/>
    <property type="match status" value="1"/>
</dbReference>
<dbReference type="SUPFAM" id="SSF53335">
    <property type="entry name" value="S-adenosyl-L-methionine-dependent methyltransferases"/>
    <property type="match status" value="1"/>
</dbReference>
<dbReference type="SUPFAM" id="SSF46785">
    <property type="entry name" value="Winged helix' DNA-binding domain"/>
    <property type="match status" value="1"/>
</dbReference>
<dbReference type="PROSITE" id="PS51683">
    <property type="entry name" value="SAM_OMT_II"/>
    <property type="match status" value="1"/>
</dbReference>
<organism>
    <name type="scientific">Mentha piperita</name>
    <name type="common">Peppermint</name>
    <name type="synonym">Mentha aquatica x Mentha spicata</name>
    <dbReference type="NCBI Taxonomy" id="34256"/>
    <lineage>
        <taxon>Eukaryota</taxon>
        <taxon>Viridiplantae</taxon>
        <taxon>Streptophyta</taxon>
        <taxon>Embryophyta</taxon>
        <taxon>Tracheophyta</taxon>
        <taxon>Spermatophyta</taxon>
        <taxon>Magnoliopsida</taxon>
        <taxon>eudicotyledons</taxon>
        <taxon>Gunneridae</taxon>
        <taxon>Pentapetalae</taxon>
        <taxon>asterids</taxon>
        <taxon>lamiids</taxon>
        <taxon>Lamiales</taxon>
        <taxon>Lamiaceae</taxon>
        <taxon>Nepetoideae</taxon>
        <taxon>Mentheae</taxon>
        <taxon>Menthinae</taxon>
        <taxon>Mentha</taxon>
    </lineage>
</organism>
<evidence type="ECO:0000250" key="1">
    <source>
        <dbReference type="UniProtKB" id="Q7XB10"/>
    </source>
</evidence>
<evidence type="ECO:0000255" key="2">
    <source>
        <dbReference type="PROSITE-ProRule" id="PRU01020"/>
    </source>
</evidence>
<evidence type="ECO:0000269" key="3">
    <source>
    </source>
</evidence>
<evidence type="ECO:0000303" key="4">
    <source>
    </source>
</evidence>
<evidence type="ECO:0000303" key="5">
    <source>
    </source>
</evidence>
<evidence type="ECO:0000305" key="6">
    <source>
    </source>
</evidence>
<feature type="chain" id="PRO_0000412067" description="8-hydroxyquercetin 8-O-methyltransferase">
    <location>
        <begin position="1"/>
        <end position="366"/>
    </location>
</feature>
<feature type="active site" description="Proton acceptor" evidence="2">
    <location>
        <position position="269"/>
    </location>
</feature>
<feature type="binding site" evidence="2">
    <location>
        <begin position="207"/>
        <end position="210"/>
    </location>
    <ligand>
        <name>S-adenosyl-L-methionine</name>
        <dbReference type="ChEBI" id="CHEBI:59789"/>
    </ligand>
</feature>
<feature type="binding site" evidence="2">
    <location>
        <begin position="231"/>
        <end position="232"/>
    </location>
    <ligand>
        <name>S-adenosyl-L-methionine</name>
        <dbReference type="ChEBI" id="CHEBI:59789"/>
    </ligand>
</feature>
<feature type="binding site" evidence="2">
    <location>
        <begin position="251"/>
        <end position="252"/>
    </location>
    <ligand>
        <name>S-adenosyl-L-methionine</name>
        <dbReference type="ChEBI" id="CHEBI:59789"/>
    </ligand>
</feature>
<feature type="binding site" evidence="2">
    <location>
        <position position="265"/>
    </location>
    <ligand>
        <name>S-adenosyl-L-methionine</name>
        <dbReference type="ChEBI" id="CHEBI:59789"/>
    </ligand>
</feature>
<keyword id="KW-0489">Methyltransferase</keyword>
<keyword id="KW-0949">S-adenosyl-L-methionine</keyword>
<keyword id="KW-0808">Transferase</keyword>
<name>Q8OMT_MENPI</name>
<protein>
    <recommendedName>
        <fullName evidence="4">8-hydroxyquercetin 8-O-methyltransferase</fullName>
        <ecNumber evidence="3">2.1.1.88</ecNumber>
    </recommendedName>
    <alternativeName>
        <fullName evidence="6">7,8,4'-trihydroxy-flavone 8-O-methyltransferase</fullName>
        <ecNumber evidence="3">2.1.1.-</ecNumber>
    </alternativeName>
    <alternativeName>
        <fullName evidence="6">8-hydroxy-flavone 8-O-methyltransferase</fullName>
        <ecNumber evidence="3">2.1.1.-</ecNumber>
    </alternativeName>
    <alternativeName>
        <fullName evidence="4">Flavonoid 8-O-methyltransferase</fullName>
    </alternativeName>
</protein>
<gene>
    <name evidence="4" type="primary">OMT2</name>
</gene>
<proteinExistence type="evidence at protein level"/>